<accession>A0A098DRQ4</accession>
<accession>A0A0E0SDM7</accession>
<sequence length="617" mass="69125">MWNDEDNNPYGTSFDRRDSQSSSINPTSPSTREYQRFEPPQTPTSDSDNEHNHGVIHDDSDDDDEDLTQDAGPKRKPGGYDSRIEQILYENPKLSILITDAGKSIESGGRYIVYTIKTGDLEVRRRYSEFASLRDALTRLHPTLIVPPIPEKHTMADYAANPTNAKQDQQIIDLRKRMLAVFLNRCRRMEEIRTDGVWWRFFDPNASWSEVLHSHPVASIPKSILKAPPLNPANPTPAHNYLPIPAASAKLKTVAGTNHDNSSGHIQAGPHAFGRFPPEGHNLGEQELDPYFISYESSIKDLEQLLTGPMEKVNRRTLSHLSSLAADLCELGSVYNAFAVSEQAPSLGPAIERIGQAADLSYIATEELSGSLGASFAEPMREHAQFAGVVRSVLKYRVLKRVQQDLTTEELSKKRALLDQLEQSEAEARRIENYLSSSQQISPPPKRSTSLREPPSHQRRDGSQEDTESIDSDFPGTHGDFSSHTPSASQGLPERSTSVPSHKKMPSGNSITNKIFGPIRHAVQGVVDVDPERTRRDLIGKTRESIGQLEQAQVVSEKDVKEASASVLKDMKRFQKDKEDDLRRYMLAYAQSQIEWAKKSKQQWEEARAEVEKIDES</sequence>
<gene>
    <name evidence="7" type="primary">ATG20</name>
    <name type="ORF">FG06950</name>
    <name type="ORF">FGRAMPH1_01T23585</name>
</gene>
<keyword id="KW-0072">Autophagy</keyword>
<keyword id="KW-0175">Coiled coil</keyword>
<keyword id="KW-0967">Endosome</keyword>
<keyword id="KW-0446">Lipid-binding</keyword>
<keyword id="KW-0472">Membrane</keyword>
<keyword id="KW-0653">Protein transport</keyword>
<keyword id="KW-1185">Reference proteome</keyword>
<keyword id="KW-0813">Transport</keyword>
<reference key="1">
    <citation type="journal article" date="2007" name="Science">
        <title>The Fusarium graminearum genome reveals a link between localized polymorphism and pathogen specialization.</title>
        <authorList>
            <person name="Cuomo C.A."/>
            <person name="Gueldener U."/>
            <person name="Xu J.-R."/>
            <person name="Trail F."/>
            <person name="Turgeon B.G."/>
            <person name="Di Pietro A."/>
            <person name="Walton J.D."/>
            <person name="Ma L.-J."/>
            <person name="Baker S.E."/>
            <person name="Rep M."/>
            <person name="Adam G."/>
            <person name="Antoniw J."/>
            <person name="Baldwin T."/>
            <person name="Calvo S.E."/>
            <person name="Chang Y.-L."/>
            <person name="DeCaprio D."/>
            <person name="Gale L.R."/>
            <person name="Gnerre S."/>
            <person name="Goswami R.S."/>
            <person name="Hammond-Kosack K."/>
            <person name="Harris L.J."/>
            <person name="Hilburn K."/>
            <person name="Kennell J.C."/>
            <person name="Kroken S."/>
            <person name="Magnuson J.K."/>
            <person name="Mannhaupt G."/>
            <person name="Mauceli E.W."/>
            <person name="Mewes H.-W."/>
            <person name="Mitterbauer R."/>
            <person name="Muehlbauer G."/>
            <person name="Muensterkoetter M."/>
            <person name="Nelson D."/>
            <person name="O'Donnell K."/>
            <person name="Ouellet T."/>
            <person name="Qi W."/>
            <person name="Quesneville H."/>
            <person name="Roncero M.I.G."/>
            <person name="Seong K.-Y."/>
            <person name="Tetko I.V."/>
            <person name="Urban M."/>
            <person name="Waalwijk C."/>
            <person name="Ward T.J."/>
            <person name="Yao J."/>
            <person name="Birren B.W."/>
            <person name="Kistler H.C."/>
        </authorList>
    </citation>
    <scope>NUCLEOTIDE SEQUENCE [LARGE SCALE GENOMIC DNA]</scope>
    <source>
        <strain>ATCC MYA-4620 / CBS 123657 / FGSC 9075 / NRRL 31084 / PH-1</strain>
    </source>
</reference>
<reference key="2">
    <citation type="journal article" date="2010" name="Nature">
        <title>Comparative genomics reveals mobile pathogenicity chromosomes in Fusarium.</title>
        <authorList>
            <person name="Ma L.-J."/>
            <person name="van der Does H.C."/>
            <person name="Borkovich K.A."/>
            <person name="Coleman J.J."/>
            <person name="Daboussi M.-J."/>
            <person name="Di Pietro A."/>
            <person name="Dufresne M."/>
            <person name="Freitag M."/>
            <person name="Grabherr M."/>
            <person name="Henrissat B."/>
            <person name="Houterman P.M."/>
            <person name="Kang S."/>
            <person name="Shim W.-B."/>
            <person name="Woloshuk C."/>
            <person name="Xie X."/>
            <person name="Xu J.-R."/>
            <person name="Antoniw J."/>
            <person name="Baker S.E."/>
            <person name="Bluhm B.H."/>
            <person name="Breakspear A."/>
            <person name="Brown D.W."/>
            <person name="Butchko R.A.E."/>
            <person name="Chapman S."/>
            <person name="Coulson R."/>
            <person name="Coutinho P.M."/>
            <person name="Danchin E.G.J."/>
            <person name="Diener A."/>
            <person name="Gale L.R."/>
            <person name="Gardiner D.M."/>
            <person name="Goff S."/>
            <person name="Hammond-Kosack K.E."/>
            <person name="Hilburn K."/>
            <person name="Hua-Van A."/>
            <person name="Jonkers W."/>
            <person name="Kazan K."/>
            <person name="Kodira C.D."/>
            <person name="Koehrsen M."/>
            <person name="Kumar L."/>
            <person name="Lee Y.-H."/>
            <person name="Li L."/>
            <person name="Manners J.M."/>
            <person name="Miranda-Saavedra D."/>
            <person name="Mukherjee M."/>
            <person name="Park G."/>
            <person name="Park J."/>
            <person name="Park S.-Y."/>
            <person name="Proctor R.H."/>
            <person name="Regev A."/>
            <person name="Ruiz-Roldan M.C."/>
            <person name="Sain D."/>
            <person name="Sakthikumar S."/>
            <person name="Sykes S."/>
            <person name="Schwartz D.C."/>
            <person name="Turgeon B.G."/>
            <person name="Wapinski I."/>
            <person name="Yoder O."/>
            <person name="Young S."/>
            <person name="Zeng Q."/>
            <person name="Zhou S."/>
            <person name="Galagan J."/>
            <person name="Cuomo C.A."/>
            <person name="Kistler H.C."/>
            <person name="Rep M."/>
        </authorList>
    </citation>
    <scope>GENOME REANNOTATION</scope>
    <source>
        <strain>ATCC MYA-4620 / CBS 123657 / FGSC 9075 / NRRL 31084 / PH-1</strain>
    </source>
</reference>
<reference key="3">
    <citation type="journal article" date="2015" name="BMC Genomics">
        <title>The completed genome sequence of the pathogenic ascomycete fungus Fusarium graminearum.</title>
        <authorList>
            <person name="King R."/>
            <person name="Urban M."/>
            <person name="Hammond-Kosack M.C.U."/>
            <person name="Hassani-Pak K."/>
            <person name="Hammond-Kosack K.E."/>
        </authorList>
    </citation>
    <scope>NUCLEOTIDE SEQUENCE [LARGE SCALE GENOMIC DNA]</scope>
    <source>
        <strain>ATCC MYA-4620 / CBS 123657 / FGSC 9075 / NRRL 31084 / PH-1</strain>
    </source>
</reference>
<reference key="4">
    <citation type="journal article" date="2017" name="Sci. Rep.">
        <title>Genome-wide functional analysis reveals that autophagy is necessary for growth, sporulation, deoxynivalenol production and virulence in Fusarium graminearum.</title>
        <authorList>
            <person name="Lv W."/>
            <person name="Wang C."/>
            <person name="Yang N."/>
            <person name="Que Y."/>
            <person name="Talbot N.J."/>
            <person name="Wang Z."/>
        </authorList>
    </citation>
    <scope>IDENTIFICATION</scope>
    <scope>FUNCTION</scope>
    <scope>DISRUPTION PHENOTYPE</scope>
</reference>
<proteinExistence type="inferred from homology"/>
<dbReference type="EMBL" id="HG970335">
    <property type="protein sequence ID" value="CEF84540.1"/>
    <property type="molecule type" value="Genomic_DNA"/>
</dbReference>
<dbReference type="FunCoup" id="A0A098DRQ4">
    <property type="interactions" value="72"/>
</dbReference>
<dbReference type="STRING" id="229533.A0A098DRQ4"/>
<dbReference type="VEuPathDB" id="FungiDB:FGRAMPH1_01G23585"/>
<dbReference type="eggNOG" id="KOG2273">
    <property type="taxonomic scope" value="Eukaryota"/>
</dbReference>
<dbReference type="InParanoid" id="A0A098DRQ4"/>
<dbReference type="PHI-base" id="PHI:123543"/>
<dbReference type="PHI-base" id="PHI:8063"/>
<dbReference type="Proteomes" id="UP000070720">
    <property type="component" value="Chromosome 4"/>
</dbReference>
<dbReference type="GO" id="GO:0005829">
    <property type="term" value="C:cytosol"/>
    <property type="evidence" value="ECO:0007669"/>
    <property type="project" value="GOC"/>
</dbReference>
<dbReference type="GO" id="GO:0010008">
    <property type="term" value="C:endosome membrane"/>
    <property type="evidence" value="ECO:0007669"/>
    <property type="project" value="UniProtKB-SubCell"/>
</dbReference>
<dbReference type="GO" id="GO:0034045">
    <property type="term" value="C:phagophore assembly site membrane"/>
    <property type="evidence" value="ECO:0007669"/>
    <property type="project" value="UniProtKB-SubCell"/>
</dbReference>
<dbReference type="GO" id="GO:0035091">
    <property type="term" value="F:phosphatidylinositol binding"/>
    <property type="evidence" value="ECO:0007669"/>
    <property type="project" value="InterPro"/>
</dbReference>
<dbReference type="GO" id="GO:0006914">
    <property type="term" value="P:autophagy"/>
    <property type="evidence" value="ECO:0007669"/>
    <property type="project" value="UniProtKB-KW"/>
</dbReference>
<dbReference type="GO" id="GO:0015031">
    <property type="term" value="P:protein transport"/>
    <property type="evidence" value="ECO:0007669"/>
    <property type="project" value="UniProtKB-KW"/>
</dbReference>
<dbReference type="GO" id="GO:0042147">
    <property type="term" value="P:retrograde transport, endosome to Golgi"/>
    <property type="evidence" value="ECO:0007669"/>
    <property type="project" value="InterPro"/>
</dbReference>
<dbReference type="CDD" id="cd06867">
    <property type="entry name" value="PX_SNX41_42"/>
    <property type="match status" value="1"/>
</dbReference>
<dbReference type="Gene3D" id="1.20.1270.60">
    <property type="entry name" value="Arfaptin homology (AH) domain/BAR domain"/>
    <property type="match status" value="2"/>
</dbReference>
<dbReference type="Gene3D" id="3.30.1520.10">
    <property type="entry name" value="Phox-like domain"/>
    <property type="match status" value="1"/>
</dbReference>
<dbReference type="InterPro" id="IPR027267">
    <property type="entry name" value="AH/BAR_dom_sf"/>
</dbReference>
<dbReference type="InterPro" id="IPR001683">
    <property type="entry name" value="PX_dom"/>
</dbReference>
<dbReference type="InterPro" id="IPR036871">
    <property type="entry name" value="PX_dom_sf"/>
</dbReference>
<dbReference type="InterPro" id="IPR044106">
    <property type="entry name" value="PX_Snx41/Atg20"/>
</dbReference>
<dbReference type="InterPro" id="IPR051079">
    <property type="entry name" value="Sorting_Nexin_Autophagy"/>
</dbReference>
<dbReference type="PANTHER" id="PTHR46979">
    <property type="entry name" value="SORTING NEXIN-41"/>
    <property type="match status" value="1"/>
</dbReference>
<dbReference type="PANTHER" id="PTHR46979:SF2">
    <property type="entry name" value="SORTING NEXIN-41"/>
    <property type="match status" value="1"/>
</dbReference>
<dbReference type="Pfam" id="PF00787">
    <property type="entry name" value="PX"/>
    <property type="match status" value="1"/>
</dbReference>
<dbReference type="SMART" id="SM00312">
    <property type="entry name" value="PX"/>
    <property type="match status" value="1"/>
</dbReference>
<dbReference type="SUPFAM" id="SSF64268">
    <property type="entry name" value="PX domain"/>
    <property type="match status" value="1"/>
</dbReference>
<dbReference type="PROSITE" id="PS50195">
    <property type="entry name" value="PX"/>
    <property type="match status" value="1"/>
</dbReference>
<organism>
    <name type="scientific">Gibberella zeae (strain ATCC MYA-4620 / CBS 123657 / FGSC 9075 / NRRL 31084 / PH-1)</name>
    <name type="common">Wheat head blight fungus</name>
    <name type="synonym">Fusarium graminearum</name>
    <dbReference type="NCBI Taxonomy" id="229533"/>
    <lineage>
        <taxon>Eukaryota</taxon>
        <taxon>Fungi</taxon>
        <taxon>Dikarya</taxon>
        <taxon>Ascomycota</taxon>
        <taxon>Pezizomycotina</taxon>
        <taxon>Sordariomycetes</taxon>
        <taxon>Hypocreomycetidae</taxon>
        <taxon>Hypocreales</taxon>
        <taxon>Nectriaceae</taxon>
        <taxon>Fusarium</taxon>
    </lineage>
</organism>
<feature type="chain" id="PRO_0000443920" description="Autophagy-related protein 20">
    <location>
        <begin position="1"/>
        <end position="617"/>
    </location>
</feature>
<feature type="domain" description="PX" evidence="4">
    <location>
        <begin position="89"/>
        <end position="209"/>
    </location>
</feature>
<feature type="region of interest" description="Disordered" evidence="5">
    <location>
        <begin position="1"/>
        <end position="83"/>
    </location>
</feature>
<feature type="region of interest" description="Disordered" evidence="5">
    <location>
        <begin position="434"/>
        <end position="516"/>
    </location>
</feature>
<feature type="coiled-coil region" evidence="3">
    <location>
        <begin position="403"/>
        <end position="440"/>
    </location>
</feature>
<feature type="compositionally biased region" description="Low complexity" evidence="5">
    <location>
        <begin position="20"/>
        <end position="31"/>
    </location>
</feature>
<feature type="compositionally biased region" description="Basic and acidic residues" evidence="5">
    <location>
        <begin position="48"/>
        <end position="58"/>
    </location>
</feature>
<feature type="compositionally biased region" description="Acidic residues" evidence="5">
    <location>
        <begin position="59"/>
        <end position="68"/>
    </location>
</feature>
<feature type="compositionally biased region" description="Basic and acidic residues" evidence="5">
    <location>
        <begin position="454"/>
        <end position="463"/>
    </location>
</feature>
<feature type="compositionally biased region" description="Polar residues" evidence="5">
    <location>
        <begin position="480"/>
        <end position="500"/>
    </location>
</feature>
<feature type="binding site" evidence="1">
    <location>
        <position position="126"/>
    </location>
    <ligand>
        <name>a 1,2-diacyl-sn-glycero-3-phospho-(1D-myo-inositol-3-phosphate)</name>
        <dbReference type="ChEBI" id="CHEBI:58088"/>
    </ligand>
</feature>
<feature type="binding site" evidence="1">
    <location>
        <position position="128"/>
    </location>
    <ligand>
        <name>a 1,2-diacyl-sn-glycero-3-phospho-(1D-myo-inositol-3-phosphate)</name>
        <dbReference type="ChEBI" id="CHEBI:58088"/>
    </ligand>
</feature>
<feature type="binding site" evidence="1">
    <location>
        <position position="152"/>
    </location>
    <ligand>
        <name>a 1,2-diacyl-sn-glycero-3-phospho-(1D-myo-inositol-3-phosphate)</name>
        <dbReference type="ChEBI" id="CHEBI:58088"/>
    </ligand>
</feature>
<feature type="binding site" evidence="1">
    <location>
        <position position="175"/>
    </location>
    <ligand>
        <name>a 1,2-diacyl-sn-glycero-3-phospho-(1D-myo-inositol-3-phosphate)</name>
        <dbReference type="ChEBI" id="CHEBI:58088"/>
    </ligand>
</feature>
<evidence type="ECO:0000250" key="1"/>
<evidence type="ECO:0000250" key="2">
    <source>
        <dbReference type="UniProtKB" id="Q07528"/>
    </source>
</evidence>
<evidence type="ECO:0000255" key="3"/>
<evidence type="ECO:0000255" key="4">
    <source>
        <dbReference type="PROSITE-ProRule" id="PRU00147"/>
    </source>
</evidence>
<evidence type="ECO:0000256" key="5">
    <source>
        <dbReference type="SAM" id="MobiDB-lite"/>
    </source>
</evidence>
<evidence type="ECO:0000269" key="6">
    <source>
    </source>
</evidence>
<evidence type="ECO:0000303" key="7">
    <source>
    </source>
</evidence>
<evidence type="ECO:0000305" key="8"/>
<comment type="function">
    <text evidence="2 6">Required for cytoplasm to vacuole transport (Cvt), pexophagy and mitophagy (By similarity). Also involved in endoplasmic reticulum-specific autophagic process and is essential for the survival of cells subjected to severe ER stress (By similarity). Functions in protein retrieval from the endocytic pathway. Required for proper sorting of the v-SNARE protein SNC1 (By similarity). Autophagy is required for proper vegetative growth, asexual/sexual reproduction, and full virulence (PubMed:28894236). Autophagy is particularly involved in the biosynthesis of deoxynivalenol (DON), an important virulence determinant (PubMed:28894236).</text>
</comment>
<comment type="subunit">
    <text evidence="2">Forms a complex with SNX4/ATG24 and ATG17 (By similarity).</text>
</comment>
<comment type="subcellular location">
    <subcellularLocation>
        <location evidence="2">Endosome membrane</location>
        <topology evidence="2">Peripheral membrane protein</topology>
    </subcellularLocation>
    <subcellularLocation>
        <location evidence="2">Preautophagosomal structure membrane</location>
        <topology evidence="2">Peripheral membrane protein</topology>
    </subcellularLocation>
</comment>
<comment type="domain">
    <text evidence="2">The PX domain binds phosphatidylinositol 3-phosphate which is necessary for peripheral membrane localization of ATG20 to the perivacuolar punctate structures (By similarity).</text>
</comment>
<comment type="disruption phenotype">
    <text evidence="6">Significantly decreases the radial growth of colonies under nutrient-rich conditions (PubMed:28894236). Strongly reduces conidiation (PubMed:28894236). Causes only mild infection in point-inoculated spikelets of flowering wheat heads and impairs the spreading to nearby spikelets (PubMed:28894236). Strongly reduces the production of deoxynivalenol (DON), an important virulence determinant (PubMed:28894236).</text>
</comment>
<comment type="similarity">
    <text evidence="8">Belongs to the sorting nexin family.</text>
</comment>
<protein>
    <recommendedName>
        <fullName evidence="7">Autophagy-related protein 20</fullName>
    </recommendedName>
</protein>
<name>ATG20_GIBZE</name>